<keyword id="KW-0007">Acetylation</keyword>
<dbReference type="EMBL" id="CU928158">
    <property type="protein sequence ID" value="CAQ89374.1"/>
    <property type="status" value="ALT_INIT"/>
    <property type="molecule type" value="Genomic_DNA"/>
</dbReference>
<dbReference type="RefSeq" id="WP_000873036.1">
    <property type="nucleotide sequence ID" value="NC_011740.1"/>
</dbReference>
<dbReference type="SMR" id="B7LT70"/>
<dbReference type="KEGG" id="efe:EFER_1862"/>
<dbReference type="HOGENOM" id="CLU_057831_2_0_6"/>
<dbReference type="OrthoDB" id="9784785at2"/>
<dbReference type="Proteomes" id="UP000000745">
    <property type="component" value="Chromosome"/>
</dbReference>
<dbReference type="FunFam" id="1.10.10.10:FF:000196">
    <property type="entry name" value="UPF0502 protein YceH"/>
    <property type="match status" value="1"/>
</dbReference>
<dbReference type="Gene3D" id="1.10.10.10">
    <property type="entry name" value="Winged helix-like DNA-binding domain superfamily/Winged helix DNA-binding domain"/>
    <property type="match status" value="2"/>
</dbReference>
<dbReference type="HAMAP" id="MF_01584">
    <property type="entry name" value="UPF0502"/>
    <property type="match status" value="1"/>
</dbReference>
<dbReference type="InterPro" id="IPR007432">
    <property type="entry name" value="DUF480"/>
</dbReference>
<dbReference type="InterPro" id="IPR036388">
    <property type="entry name" value="WH-like_DNA-bd_sf"/>
</dbReference>
<dbReference type="InterPro" id="IPR036390">
    <property type="entry name" value="WH_DNA-bd_sf"/>
</dbReference>
<dbReference type="NCBIfam" id="NF008413">
    <property type="entry name" value="PRK11239.1"/>
    <property type="match status" value="1"/>
</dbReference>
<dbReference type="PANTHER" id="PTHR38768">
    <property type="entry name" value="UPF0502 PROTEIN YCEH"/>
    <property type="match status" value="1"/>
</dbReference>
<dbReference type="PANTHER" id="PTHR38768:SF1">
    <property type="entry name" value="UPF0502 PROTEIN YCEH"/>
    <property type="match status" value="1"/>
</dbReference>
<dbReference type="Pfam" id="PF04337">
    <property type="entry name" value="DUF480"/>
    <property type="match status" value="1"/>
</dbReference>
<dbReference type="SUPFAM" id="SSF46785">
    <property type="entry name" value="Winged helix' DNA-binding domain"/>
    <property type="match status" value="2"/>
</dbReference>
<comment type="similarity">
    <text evidence="1">Belongs to the UPF0502 family.</text>
</comment>
<comment type="sequence caution" evidence="2">
    <conflict type="erroneous initiation">
        <sequence resource="EMBL-CDS" id="CAQ89374"/>
    </conflict>
</comment>
<protein>
    <recommendedName>
        <fullName evidence="1">UPF0502 protein YceH</fullName>
    </recommendedName>
</protein>
<feature type="chain" id="PRO_0000382558" description="UPF0502 protein YceH">
    <location>
        <begin position="1"/>
        <end position="215"/>
    </location>
</feature>
<feature type="modified residue" description="N6-acetyllysine" evidence="1">
    <location>
        <position position="80"/>
    </location>
</feature>
<sequence>MKYELTAREARVIGCLLEKQVTTPEQYPLSLNGVVTACNQKTNREPVMNLSEQEVQTELDNLVKRHFLRTVSGFGNRVTKYEQRFCNSEFGDLKLSPAEVALITTLLLRGAQTPGELRSRAARMYEFSDMSEVDSTLEKLAQREDGPFVVRLAREPGKRESRYMHLFCGEVDDTASFAEETPPVAGELQARVEALENEVAELKQRLDSLLAHLGD</sequence>
<organism>
    <name type="scientific">Escherichia fergusonii (strain ATCC 35469 / DSM 13698 / CCUG 18766 / IAM 14443 / JCM 21226 / LMG 7866 / NBRC 102419 / NCTC 12128 / CDC 0568-73)</name>
    <dbReference type="NCBI Taxonomy" id="585054"/>
    <lineage>
        <taxon>Bacteria</taxon>
        <taxon>Pseudomonadati</taxon>
        <taxon>Pseudomonadota</taxon>
        <taxon>Gammaproteobacteria</taxon>
        <taxon>Enterobacterales</taxon>
        <taxon>Enterobacteriaceae</taxon>
        <taxon>Escherichia</taxon>
    </lineage>
</organism>
<proteinExistence type="inferred from homology"/>
<name>YCEH_ESCF3</name>
<gene>
    <name evidence="1" type="primary">yceH</name>
    <name type="ordered locus">EFER_1862</name>
</gene>
<reference key="1">
    <citation type="journal article" date="2009" name="PLoS Genet.">
        <title>Organised genome dynamics in the Escherichia coli species results in highly diverse adaptive paths.</title>
        <authorList>
            <person name="Touchon M."/>
            <person name="Hoede C."/>
            <person name="Tenaillon O."/>
            <person name="Barbe V."/>
            <person name="Baeriswyl S."/>
            <person name="Bidet P."/>
            <person name="Bingen E."/>
            <person name="Bonacorsi S."/>
            <person name="Bouchier C."/>
            <person name="Bouvet O."/>
            <person name="Calteau A."/>
            <person name="Chiapello H."/>
            <person name="Clermont O."/>
            <person name="Cruveiller S."/>
            <person name="Danchin A."/>
            <person name="Diard M."/>
            <person name="Dossat C."/>
            <person name="Karoui M.E."/>
            <person name="Frapy E."/>
            <person name="Garry L."/>
            <person name="Ghigo J.M."/>
            <person name="Gilles A.M."/>
            <person name="Johnson J."/>
            <person name="Le Bouguenec C."/>
            <person name="Lescat M."/>
            <person name="Mangenot S."/>
            <person name="Martinez-Jehanne V."/>
            <person name="Matic I."/>
            <person name="Nassif X."/>
            <person name="Oztas S."/>
            <person name="Petit M.A."/>
            <person name="Pichon C."/>
            <person name="Rouy Z."/>
            <person name="Ruf C.S."/>
            <person name="Schneider D."/>
            <person name="Tourret J."/>
            <person name="Vacherie B."/>
            <person name="Vallenet D."/>
            <person name="Medigue C."/>
            <person name="Rocha E.P.C."/>
            <person name="Denamur E."/>
        </authorList>
    </citation>
    <scope>NUCLEOTIDE SEQUENCE [LARGE SCALE GENOMIC DNA]</scope>
    <source>
        <strain>ATCC 35469 / DSM 13698 / BCRC 15582 / CCUG 18766 / IAM 14443 / JCM 21226 / LMG 7866 / NBRC 102419 / NCTC 12128 / CDC 0568-73</strain>
    </source>
</reference>
<accession>B7LT70</accession>
<evidence type="ECO:0000255" key="1">
    <source>
        <dbReference type="HAMAP-Rule" id="MF_01584"/>
    </source>
</evidence>
<evidence type="ECO:0000305" key="2"/>